<dbReference type="EMBL" id="CP000395">
    <property type="protein sequence ID" value="ABH01523.1"/>
    <property type="molecule type" value="Genomic_DNA"/>
</dbReference>
<dbReference type="EMBL" id="CP002933">
    <property type="protein sequence ID" value="AEL69484.1"/>
    <property type="molecule type" value="Genomic_DNA"/>
</dbReference>
<dbReference type="RefSeq" id="WP_002656880.1">
    <property type="nucleotide sequence ID" value="NZ_CP160066.1"/>
</dbReference>
<dbReference type="SMR" id="Q0SNQ5"/>
<dbReference type="STRING" id="29518.BLA32_03015"/>
<dbReference type="GeneID" id="83865728"/>
<dbReference type="KEGG" id="baf:BAPKO_0266"/>
<dbReference type="KEGG" id="bafz:BafPKo_0258"/>
<dbReference type="PATRIC" id="fig|390236.22.peg.252"/>
<dbReference type="eggNOG" id="COG0828">
    <property type="taxonomic scope" value="Bacteria"/>
</dbReference>
<dbReference type="HOGENOM" id="CLU_159258_1_2_12"/>
<dbReference type="OrthoDB" id="9799244at2"/>
<dbReference type="Proteomes" id="UP000005216">
    <property type="component" value="Chromosome"/>
</dbReference>
<dbReference type="GO" id="GO:1990904">
    <property type="term" value="C:ribonucleoprotein complex"/>
    <property type="evidence" value="ECO:0007669"/>
    <property type="project" value="UniProtKB-KW"/>
</dbReference>
<dbReference type="GO" id="GO:0005840">
    <property type="term" value="C:ribosome"/>
    <property type="evidence" value="ECO:0007669"/>
    <property type="project" value="UniProtKB-KW"/>
</dbReference>
<dbReference type="GO" id="GO:0003735">
    <property type="term" value="F:structural constituent of ribosome"/>
    <property type="evidence" value="ECO:0007669"/>
    <property type="project" value="InterPro"/>
</dbReference>
<dbReference type="GO" id="GO:0006412">
    <property type="term" value="P:translation"/>
    <property type="evidence" value="ECO:0007669"/>
    <property type="project" value="UniProtKB-UniRule"/>
</dbReference>
<dbReference type="Gene3D" id="1.20.5.1150">
    <property type="entry name" value="Ribosomal protein S8"/>
    <property type="match status" value="1"/>
</dbReference>
<dbReference type="HAMAP" id="MF_00358">
    <property type="entry name" value="Ribosomal_bS21"/>
    <property type="match status" value="1"/>
</dbReference>
<dbReference type="InterPro" id="IPR001911">
    <property type="entry name" value="Ribosomal_bS21"/>
</dbReference>
<dbReference type="InterPro" id="IPR018278">
    <property type="entry name" value="Ribosomal_bS21_CS"/>
</dbReference>
<dbReference type="InterPro" id="IPR038380">
    <property type="entry name" value="Ribosomal_bS21_sf"/>
</dbReference>
<dbReference type="NCBIfam" id="TIGR00030">
    <property type="entry name" value="S21p"/>
    <property type="match status" value="1"/>
</dbReference>
<dbReference type="PANTHER" id="PTHR21109">
    <property type="entry name" value="MITOCHONDRIAL 28S RIBOSOMAL PROTEIN S21"/>
    <property type="match status" value="1"/>
</dbReference>
<dbReference type="PANTHER" id="PTHR21109:SF22">
    <property type="entry name" value="SMALL RIBOSOMAL SUBUNIT PROTEIN BS21"/>
    <property type="match status" value="1"/>
</dbReference>
<dbReference type="Pfam" id="PF01165">
    <property type="entry name" value="Ribosomal_S21"/>
    <property type="match status" value="1"/>
</dbReference>
<dbReference type="PRINTS" id="PR00976">
    <property type="entry name" value="RIBOSOMALS21"/>
</dbReference>
<dbReference type="PROSITE" id="PS01181">
    <property type="entry name" value="RIBOSOMAL_S21"/>
    <property type="match status" value="1"/>
</dbReference>
<evidence type="ECO:0000255" key="1">
    <source>
        <dbReference type="HAMAP-Rule" id="MF_00358"/>
    </source>
</evidence>
<evidence type="ECO:0000256" key="2">
    <source>
        <dbReference type="SAM" id="MobiDB-lite"/>
    </source>
</evidence>
<evidence type="ECO:0000305" key="3"/>
<reference key="1">
    <citation type="journal article" date="2006" name="BMC Genomics">
        <title>Comparative genome analysis: selection pressure on the Borrelia vls cassettes is essential for infectivity.</title>
        <authorList>
            <person name="Gloeckner G."/>
            <person name="Schulte-Spechtel U."/>
            <person name="Schilhabel M."/>
            <person name="Felder M."/>
            <person name="Suehnel J."/>
            <person name="Wilske B."/>
            <person name="Platzer M."/>
        </authorList>
    </citation>
    <scope>NUCLEOTIDE SEQUENCE [LARGE SCALE GENOMIC DNA]</scope>
    <source>
        <strain>PKo</strain>
    </source>
</reference>
<reference key="2">
    <citation type="journal article" date="2011" name="J. Bacteriol.">
        <title>Whole-genome sequences of two Borrelia afzelii and two Borrelia garinii Lyme disease agent isolates.</title>
        <authorList>
            <person name="Casjens S.R."/>
            <person name="Mongodin E.F."/>
            <person name="Qiu W.G."/>
            <person name="Dunn J.J."/>
            <person name="Luft B.J."/>
            <person name="Fraser-Liggett C.M."/>
            <person name="Schutzer S.E."/>
        </authorList>
    </citation>
    <scope>NUCLEOTIDE SEQUENCE [LARGE SCALE GENOMIC DNA]</scope>
    <source>
        <strain>PKo</strain>
    </source>
</reference>
<name>RS21_BORAP</name>
<protein>
    <recommendedName>
        <fullName evidence="1">Small ribosomal subunit protein bS21</fullName>
    </recommendedName>
    <alternativeName>
        <fullName evidence="3">30S ribosomal protein S21</fullName>
    </alternativeName>
</protein>
<accession>Q0SNQ5</accession>
<accession>G0IR98</accession>
<sequence length="69" mass="8579">MVTVTVDKNENLEKALKRFKRMIEKEAIIREWKRREYYEKPSTIRVKKEKAFKRKQAKKVRKLKQKTNR</sequence>
<feature type="chain" id="PRO_0000266631" description="Small ribosomal subunit protein bS21">
    <location>
        <begin position="1"/>
        <end position="69"/>
    </location>
</feature>
<feature type="region of interest" description="Disordered" evidence="2">
    <location>
        <begin position="50"/>
        <end position="69"/>
    </location>
</feature>
<organism>
    <name type="scientific">Borreliella afzelii (strain PKo)</name>
    <name type="common">Borrelia afzelii</name>
    <dbReference type="NCBI Taxonomy" id="390236"/>
    <lineage>
        <taxon>Bacteria</taxon>
        <taxon>Pseudomonadati</taxon>
        <taxon>Spirochaetota</taxon>
        <taxon>Spirochaetia</taxon>
        <taxon>Spirochaetales</taxon>
        <taxon>Borreliaceae</taxon>
        <taxon>Borreliella</taxon>
    </lineage>
</organism>
<comment type="similarity">
    <text evidence="1">Belongs to the bacterial ribosomal protein bS21 family.</text>
</comment>
<proteinExistence type="inferred from homology"/>
<keyword id="KW-0687">Ribonucleoprotein</keyword>
<keyword id="KW-0689">Ribosomal protein</keyword>
<gene>
    <name evidence="1" type="primary">rpsU</name>
    <name type="ordered locus">BAPKO_0266</name>
    <name type="ordered locus">BafPKo_0258</name>
</gene>